<evidence type="ECO:0000255" key="1">
    <source>
        <dbReference type="HAMAP-Rule" id="MF_00060"/>
    </source>
</evidence>
<dbReference type="EC" id="3.1.3.5" evidence="1"/>
<dbReference type="EMBL" id="CP000548">
    <property type="protein sequence ID" value="ABO05533.1"/>
    <property type="molecule type" value="Genomic_DNA"/>
</dbReference>
<dbReference type="RefSeq" id="WP_004198595.1">
    <property type="nucleotide sequence ID" value="NZ_CP007802.1"/>
</dbReference>
<dbReference type="SMR" id="A3MK87"/>
<dbReference type="GeneID" id="92979090"/>
<dbReference type="KEGG" id="bmaz:BM44_1979"/>
<dbReference type="KEGG" id="bmn:BMA10247_1119"/>
<dbReference type="PATRIC" id="fig|320389.8.peg.2222"/>
<dbReference type="GO" id="GO:0005737">
    <property type="term" value="C:cytoplasm"/>
    <property type="evidence" value="ECO:0007669"/>
    <property type="project" value="UniProtKB-SubCell"/>
</dbReference>
<dbReference type="GO" id="GO:0008254">
    <property type="term" value="F:3'-nucleotidase activity"/>
    <property type="evidence" value="ECO:0007669"/>
    <property type="project" value="TreeGrafter"/>
</dbReference>
<dbReference type="GO" id="GO:0008253">
    <property type="term" value="F:5'-nucleotidase activity"/>
    <property type="evidence" value="ECO:0007669"/>
    <property type="project" value="UniProtKB-UniRule"/>
</dbReference>
<dbReference type="GO" id="GO:0004309">
    <property type="term" value="F:exopolyphosphatase activity"/>
    <property type="evidence" value="ECO:0007669"/>
    <property type="project" value="TreeGrafter"/>
</dbReference>
<dbReference type="GO" id="GO:0046872">
    <property type="term" value="F:metal ion binding"/>
    <property type="evidence" value="ECO:0007669"/>
    <property type="project" value="UniProtKB-UniRule"/>
</dbReference>
<dbReference type="GO" id="GO:0000166">
    <property type="term" value="F:nucleotide binding"/>
    <property type="evidence" value="ECO:0007669"/>
    <property type="project" value="UniProtKB-KW"/>
</dbReference>
<dbReference type="FunFam" id="3.40.1210.10:FF:000001">
    <property type="entry name" value="5'/3'-nucleotidase SurE"/>
    <property type="match status" value="1"/>
</dbReference>
<dbReference type="Gene3D" id="3.40.1210.10">
    <property type="entry name" value="Survival protein SurE-like phosphatase/nucleotidase"/>
    <property type="match status" value="1"/>
</dbReference>
<dbReference type="HAMAP" id="MF_00060">
    <property type="entry name" value="SurE"/>
    <property type="match status" value="1"/>
</dbReference>
<dbReference type="InterPro" id="IPR030048">
    <property type="entry name" value="SurE"/>
</dbReference>
<dbReference type="InterPro" id="IPR002828">
    <property type="entry name" value="SurE-like_Pase/nucleotidase"/>
</dbReference>
<dbReference type="InterPro" id="IPR036523">
    <property type="entry name" value="SurE-like_sf"/>
</dbReference>
<dbReference type="NCBIfam" id="NF001489">
    <property type="entry name" value="PRK00346.1-3"/>
    <property type="match status" value="1"/>
</dbReference>
<dbReference type="NCBIfam" id="NF001490">
    <property type="entry name" value="PRK00346.1-4"/>
    <property type="match status" value="1"/>
</dbReference>
<dbReference type="NCBIfam" id="TIGR00087">
    <property type="entry name" value="surE"/>
    <property type="match status" value="1"/>
</dbReference>
<dbReference type="PANTHER" id="PTHR30457">
    <property type="entry name" value="5'-NUCLEOTIDASE SURE"/>
    <property type="match status" value="1"/>
</dbReference>
<dbReference type="PANTHER" id="PTHR30457:SF12">
    <property type="entry name" value="5'_3'-NUCLEOTIDASE SURE"/>
    <property type="match status" value="1"/>
</dbReference>
<dbReference type="Pfam" id="PF01975">
    <property type="entry name" value="SurE"/>
    <property type="match status" value="1"/>
</dbReference>
<dbReference type="SUPFAM" id="SSF64167">
    <property type="entry name" value="SurE-like"/>
    <property type="match status" value="1"/>
</dbReference>
<organism>
    <name type="scientific">Burkholderia mallei (strain NCTC 10247)</name>
    <dbReference type="NCBI Taxonomy" id="320389"/>
    <lineage>
        <taxon>Bacteria</taxon>
        <taxon>Pseudomonadati</taxon>
        <taxon>Pseudomonadota</taxon>
        <taxon>Betaproteobacteria</taxon>
        <taxon>Burkholderiales</taxon>
        <taxon>Burkholderiaceae</taxon>
        <taxon>Burkholderia</taxon>
        <taxon>pseudomallei group</taxon>
    </lineage>
</organism>
<reference key="1">
    <citation type="journal article" date="2010" name="Genome Biol. Evol.">
        <title>Continuing evolution of Burkholderia mallei through genome reduction and large-scale rearrangements.</title>
        <authorList>
            <person name="Losada L."/>
            <person name="Ronning C.M."/>
            <person name="DeShazer D."/>
            <person name="Woods D."/>
            <person name="Fedorova N."/>
            <person name="Kim H.S."/>
            <person name="Shabalina S.A."/>
            <person name="Pearson T.R."/>
            <person name="Brinkac L."/>
            <person name="Tan P."/>
            <person name="Nandi T."/>
            <person name="Crabtree J."/>
            <person name="Badger J."/>
            <person name="Beckstrom-Sternberg S."/>
            <person name="Saqib M."/>
            <person name="Schutzer S.E."/>
            <person name="Keim P."/>
            <person name="Nierman W.C."/>
        </authorList>
    </citation>
    <scope>NUCLEOTIDE SEQUENCE [LARGE SCALE GENOMIC DNA]</scope>
    <source>
        <strain>NCTC 10247</strain>
    </source>
</reference>
<feature type="chain" id="PRO_1000007706" description="5'-nucleotidase SurE">
    <location>
        <begin position="1"/>
        <end position="253"/>
    </location>
</feature>
<feature type="binding site" evidence="1">
    <location>
        <position position="8"/>
    </location>
    <ligand>
        <name>a divalent metal cation</name>
        <dbReference type="ChEBI" id="CHEBI:60240"/>
    </ligand>
</feature>
<feature type="binding site" evidence="1">
    <location>
        <position position="9"/>
    </location>
    <ligand>
        <name>a divalent metal cation</name>
        <dbReference type="ChEBI" id="CHEBI:60240"/>
    </ligand>
</feature>
<feature type="binding site" evidence="1">
    <location>
        <position position="39"/>
    </location>
    <ligand>
        <name>a divalent metal cation</name>
        <dbReference type="ChEBI" id="CHEBI:60240"/>
    </ligand>
</feature>
<feature type="binding site" evidence="1">
    <location>
        <position position="92"/>
    </location>
    <ligand>
        <name>a divalent metal cation</name>
        <dbReference type="ChEBI" id="CHEBI:60240"/>
    </ligand>
</feature>
<accession>A3MK87</accession>
<keyword id="KW-0963">Cytoplasm</keyword>
<keyword id="KW-0378">Hydrolase</keyword>
<keyword id="KW-0479">Metal-binding</keyword>
<keyword id="KW-0547">Nucleotide-binding</keyword>
<proteinExistence type="inferred from homology"/>
<protein>
    <recommendedName>
        <fullName evidence="1">5'-nucleotidase SurE</fullName>
        <ecNumber evidence="1">3.1.3.5</ecNumber>
    </recommendedName>
    <alternativeName>
        <fullName evidence="1">Nucleoside 5'-monophosphate phosphohydrolase</fullName>
    </alternativeName>
</protein>
<sequence>MRILLSNDDGYLAPGLAALYEALRPLAEILVMAPEQNCSGASNSLTLSRPLSVSRSAATGFYYVNGTPTDSVHVALTGMLDTKPDLVVSGINNGQNMGDDTLYSGTVAAATEGIMFGVPAIAFSLVHKEWAHLGDAARVAAEIVRHYLDHPLPGQPLLNVNIPNLPYEELKGWRVTRLGKRHPSQPVIRQTNPRGEPIYWIGAAGDALDASEGTDFHATASGYVSITPLQLDLTHTQMLGATRDWARAGSGAS</sequence>
<comment type="function">
    <text evidence="1">Nucleotidase that shows phosphatase activity on nucleoside 5'-monophosphates.</text>
</comment>
<comment type="catalytic activity">
    <reaction evidence="1">
        <text>a ribonucleoside 5'-phosphate + H2O = a ribonucleoside + phosphate</text>
        <dbReference type="Rhea" id="RHEA:12484"/>
        <dbReference type="ChEBI" id="CHEBI:15377"/>
        <dbReference type="ChEBI" id="CHEBI:18254"/>
        <dbReference type="ChEBI" id="CHEBI:43474"/>
        <dbReference type="ChEBI" id="CHEBI:58043"/>
        <dbReference type="EC" id="3.1.3.5"/>
    </reaction>
</comment>
<comment type="cofactor">
    <cofactor evidence="1">
        <name>a divalent metal cation</name>
        <dbReference type="ChEBI" id="CHEBI:60240"/>
    </cofactor>
    <text evidence="1">Binds 1 divalent metal cation per subunit.</text>
</comment>
<comment type="subcellular location">
    <subcellularLocation>
        <location evidence="1">Cytoplasm</location>
    </subcellularLocation>
</comment>
<comment type="similarity">
    <text evidence="1">Belongs to the SurE nucleotidase family.</text>
</comment>
<name>SURE_BURM7</name>
<gene>
    <name evidence="1" type="primary">surE</name>
    <name type="ordered locus">BMA10247_1119</name>
</gene>